<gene>
    <name evidence="1" type="primary">lpxB</name>
    <name type="ordered locus">A1I_05190</name>
</gene>
<comment type="function">
    <text evidence="1">Condensation of UDP-2,3-diacylglucosamine and 2,3-diacylglucosamine-1-phosphate to form lipid A disaccharide, a precursor of lipid A, a phosphorylated glycolipid that anchors the lipopolysaccharide to the outer membrane of the cell.</text>
</comment>
<comment type="catalytic activity">
    <reaction evidence="1">
        <text>a lipid X + a UDP-2-N,3-O-bis[(3R)-3-hydroxyacyl]-alpha-D-glucosamine = a lipid A disaccharide + UDP + H(+)</text>
        <dbReference type="Rhea" id="RHEA:67828"/>
        <dbReference type="ChEBI" id="CHEBI:15378"/>
        <dbReference type="ChEBI" id="CHEBI:58223"/>
        <dbReference type="ChEBI" id="CHEBI:137748"/>
        <dbReference type="ChEBI" id="CHEBI:176338"/>
        <dbReference type="ChEBI" id="CHEBI:176343"/>
        <dbReference type="EC" id="2.4.1.182"/>
    </reaction>
</comment>
<comment type="pathway">
    <text evidence="1">Bacterial outer membrane biogenesis; LPS lipid A biosynthesis.</text>
</comment>
<comment type="similarity">
    <text evidence="1">Belongs to the LpxB family.</text>
</comment>
<dbReference type="EC" id="2.4.1.182" evidence="1"/>
<dbReference type="EMBL" id="CP000849">
    <property type="protein sequence ID" value="ABV79367.1"/>
    <property type="molecule type" value="Genomic_DNA"/>
</dbReference>
<dbReference type="RefSeq" id="WP_011477480.1">
    <property type="nucleotide sequence ID" value="NC_009883.1"/>
</dbReference>
<dbReference type="SMR" id="A8GU85"/>
<dbReference type="CAZy" id="GT19">
    <property type="family name" value="Glycosyltransferase Family 19"/>
</dbReference>
<dbReference type="KEGG" id="rbo:A1I_05190"/>
<dbReference type="HOGENOM" id="CLU_036577_2_0_5"/>
<dbReference type="UniPathway" id="UPA00973"/>
<dbReference type="GO" id="GO:0016020">
    <property type="term" value="C:membrane"/>
    <property type="evidence" value="ECO:0007669"/>
    <property type="project" value="GOC"/>
</dbReference>
<dbReference type="GO" id="GO:0008915">
    <property type="term" value="F:lipid-A-disaccharide synthase activity"/>
    <property type="evidence" value="ECO:0007669"/>
    <property type="project" value="UniProtKB-UniRule"/>
</dbReference>
<dbReference type="GO" id="GO:0005543">
    <property type="term" value="F:phospholipid binding"/>
    <property type="evidence" value="ECO:0007669"/>
    <property type="project" value="TreeGrafter"/>
</dbReference>
<dbReference type="GO" id="GO:0009245">
    <property type="term" value="P:lipid A biosynthetic process"/>
    <property type="evidence" value="ECO:0007669"/>
    <property type="project" value="UniProtKB-UniRule"/>
</dbReference>
<dbReference type="HAMAP" id="MF_00392">
    <property type="entry name" value="LpxB"/>
    <property type="match status" value="1"/>
</dbReference>
<dbReference type="InterPro" id="IPR003835">
    <property type="entry name" value="Glyco_trans_19"/>
</dbReference>
<dbReference type="NCBIfam" id="TIGR00215">
    <property type="entry name" value="lpxB"/>
    <property type="match status" value="1"/>
</dbReference>
<dbReference type="PANTHER" id="PTHR30372">
    <property type="entry name" value="LIPID-A-DISACCHARIDE SYNTHASE"/>
    <property type="match status" value="1"/>
</dbReference>
<dbReference type="PANTHER" id="PTHR30372:SF4">
    <property type="entry name" value="LIPID-A-DISACCHARIDE SYNTHASE, MITOCHONDRIAL-RELATED"/>
    <property type="match status" value="1"/>
</dbReference>
<dbReference type="Pfam" id="PF02684">
    <property type="entry name" value="LpxB"/>
    <property type="match status" value="1"/>
</dbReference>
<dbReference type="SUPFAM" id="SSF53756">
    <property type="entry name" value="UDP-Glycosyltransferase/glycogen phosphorylase"/>
    <property type="match status" value="1"/>
</dbReference>
<reference key="1">
    <citation type="submission" date="2007-09" db="EMBL/GenBank/DDBJ databases">
        <title>Complete genome sequencing of Rickettsia bellii.</title>
        <authorList>
            <person name="Madan A."/>
            <person name="Lee H."/>
            <person name="Madan A."/>
            <person name="Yoon J.-G."/>
            <person name="Ryu G.-Y."/>
            <person name="Dasch G."/>
            <person name="Ereemeva M."/>
        </authorList>
    </citation>
    <scope>NUCLEOTIDE SEQUENCE [LARGE SCALE GENOMIC DNA]</scope>
    <source>
        <strain>OSU 85-389</strain>
    </source>
</reference>
<sequence>MKKIYFIAGEASGDFAGGRIIRNLKADKELKIIGIGGRNMEEAGNFESLFPISEINLMGFFEVIPHIFRIKKLINKTVEDIIDNKPDILITIDSPGFTYRVAAKVRERLPELKMIHIVAPSVWAYKEGRAAKYAKIYNCLFALLPFEPPYFTKVGLDCRYIGHPIMEQEFYSDKVALRQELEIDEDTKVLCVTLGSRKGEILRHLPIFIPAIEKVYDDHKKKLMVIFPLANPDHERIIKPFLEKVRFNYIFSYERLKSYAVSDLALAKSGTNTLEIAASGTPMIVAYKVNIFSFIIIRLLIKIKYVTLINIIGNREIIPEFIQFNCEANLISDKLKELLLNPQEVDKQITESHKILQELGFKSNIYPSYLATKIIRQEFLK</sequence>
<protein>
    <recommendedName>
        <fullName evidence="1">Lipid-A-disaccharide synthase</fullName>
        <ecNumber evidence="1">2.4.1.182</ecNumber>
    </recommendedName>
</protein>
<name>LPXB_RICB8</name>
<feature type="chain" id="PRO_1000049412" description="Lipid-A-disaccharide synthase">
    <location>
        <begin position="1"/>
        <end position="381"/>
    </location>
</feature>
<evidence type="ECO:0000255" key="1">
    <source>
        <dbReference type="HAMAP-Rule" id="MF_00392"/>
    </source>
</evidence>
<proteinExistence type="inferred from homology"/>
<keyword id="KW-0328">Glycosyltransferase</keyword>
<keyword id="KW-0441">Lipid A biosynthesis</keyword>
<keyword id="KW-0444">Lipid biosynthesis</keyword>
<keyword id="KW-0443">Lipid metabolism</keyword>
<keyword id="KW-0808">Transferase</keyword>
<accession>A8GU85</accession>
<organism>
    <name type="scientific">Rickettsia bellii (strain OSU 85-389)</name>
    <dbReference type="NCBI Taxonomy" id="391896"/>
    <lineage>
        <taxon>Bacteria</taxon>
        <taxon>Pseudomonadati</taxon>
        <taxon>Pseudomonadota</taxon>
        <taxon>Alphaproteobacteria</taxon>
        <taxon>Rickettsiales</taxon>
        <taxon>Rickettsiaceae</taxon>
        <taxon>Rickettsieae</taxon>
        <taxon>Rickettsia</taxon>
        <taxon>belli group</taxon>
    </lineage>
</organism>